<evidence type="ECO:0000255" key="1">
    <source>
        <dbReference type="HAMAP-Rule" id="MF_00022"/>
    </source>
</evidence>
<organism>
    <name type="scientific">Shewanella halifaxensis (strain HAW-EB4)</name>
    <dbReference type="NCBI Taxonomy" id="458817"/>
    <lineage>
        <taxon>Bacteria</taxon>
        <taxon>Pseudomonadati</taxon>
        <taxon>Pseudomonadota</taxon>
        <taxon>Gammaproteobacteria</taxon>
        <taxon>Alteromonadales</taxon>
        <taxon>Shewanellaceae</taxon>
        <taxon>Shewanella</taxon>
    </lineage>
</organism>
<keyword id="KW-0030">Aminoacyl-tRNA synthetase</keyword>
<keyword id="KW-0067">ATP-binding</keyword>
<keyword id="KW-0963">Cytoplasm</keyword>
<keyword id="KW-0436">Ligase</keyword>
<keyword id="KW-0479">Metal-binding</keyword>
<keyword id="KW-0547">Nucleotide-binding</keyword>
<keyword id="KW-0648">Protein biosynthesis</keyword>
<keyword id="KW-0862">Zinc</keyword>
<dbReference type="EC" id="6.1.1.17" evidence="1"/>
<dbReference type="EMBL" id="CP000931">
    <property type="protein sequence ID" value="ABZ76105.1"/>
    <property type="molecule type" value="Genomic_DNA"/>
</dbReference>
<dbReference type="RefSeq" id="WP_012276645.1">
    <property type="nucleotide sequence ID" value="NC_010334.1"/>
</dbReference>
<dbReference type="SMR" id="B0TNB9"/>
<dbReference type="STRING" id="458817.Shal_1539"/>
<dbReference type="KEGG" id="shl:Shal_1539"/>
<dbReference type="eggNOG" id="COG0008">
    <property type="taxonomic scope" value="Bacteria"/>
</dbReference>
<dbReference type="HOGENOM" id="CLU_015768_6_0_6"/>
<dbReference type="OrthoDB" id="9807503at2"/>
<dbReference type="Proteomes" id="UP000001317">
    <property type="component" value="Chromosome"/>
</dbReference>
<dbReference type="GO" id="GO:0005829">
    <property type="term" value="C:cytosol"/>
    <property type="evidence" value="ECO:0007669"/>
    <property type="project" value="TreeGrafter"/>
</dbReference>
<dbReference type="GO" id="GO:0005524">
    <property type="term" value="F:ATP binding"/>
    <property type="evidence" value="ECO:0007669"/>
    <property type="project" value="UniProtKB-UniRule"/>
</dbReference>
<dbReference type="GO" id="GO:0004818">
    <property type="term" value="F:glutamate-tRNA ligase activity"/>
    <property type="evidence" value="ECO:0007669"/>
    <property type="project" value="UniProtKB-UniRule"/>
</dbReference>
<dbReference type="GO" id="GO:0000049">
    <property type="term" value="F:tRNA binding"/>
    <property type="evidence" value="ECO:0007669"/>
    <property type="project" value="InterPro"/>
</dbReference>
<dbReference type="GO" id="GO:0008270">
    <property type="term" value="F:zinc ion binding"/>
    <property type="evidence" value="ECO:0007669"/>
    <property type="project" value="UniProtKB-UniRule"/>
</dbReference>
<dbReference type="GO" id="GO:0006424">
    <property type="term" value="P:glutamyl-tRNA aminoacylation"/>
    <property type="evidence" value="ECO:0007669"/>
    <property type="project" value="UniProtKB-UniRule"/>
</dbReference>
<dbReference type="CDD" id="cd00808">
    <property type="entry name" value="GluRS_core"/>
    <property type="match status" value="1"/>
</dbReference>
<dbReference type="FunFam" id="3.40.50.620:FF:000007">
    <property type="entry name" value="Glutamate--tRNA ligase"/>
    <property type="match status" value="1"/>
</dbReference>
<dbReference type="Gene3D" id="1.10.10.350">
    <property type="match status" value="1"/>
</dbReference>
<dbReference type="Gene3D" id="3.40.50.620">
    <property type="entry name" value="HUPs"/>
    <property type="match status" value="1"/>
</dbReference>
<dbReference type="HAMAP" id="MF_00022">
    <property type="entry name" value="Glu_tRNA_synth_type1"/>
    <property type="match status" value="1"/>
</dbReference>
<dbReference type="InterPro" id="IPR045462">
    <property type="entry name" value="aa-tRNA-synth_I_cd-bd"/>
</dbReference>
<dbReference type="InterPro" id="IPR020751">
    <property type="entry name" value="aa-tRNA-synth_I_codon-bd_sub2"/>
</dbReference>
<dbReference type="InterPro" id="IPR001412">
    <property type="entry name" value="aa-tRNA-synth_I_CS"/>
</dbReference>
<dbReference type="InterPro" id="IPR008925">
    <property type="entry name" value="aa_tRNA-synth_I_cd-bd_sf"/>
</dbReference>
<dbReference type="InterPro" id="IPR004527">
    <property type="entry name" value="Glu-tRNA-ligase_bac/mito"/>
</dbReference>
<dbReference type="InterPro" id="IPR000924">
    <property type="entry name" value="Glu/Gln-tRNA-synth"/>
</dbReference>
<dbReference type="InterPro" id="IPR020058">
    <property type="entry name" value="Glu/Gln-tRNA-synth_Ib_cat-dom"/>
</dbReference>
<dbReference type="InterPro" id="IPR049940">
    <property type="entry name" value="GluQ/Sye"/>
</dbReference>
<dbReference type="InterPro" id="IPR033910">
    <property type="entry name" value="GluRS_core"/>
</dbReference>
<dbReference type="InterPro" id="IPR014729">
    <property type="entry name" value="Rossmann-like_a/b/a_fold"/>
</dbReference>
<dbReference type="NCBIfam" id="TIGR00464">
    <property type="entry name" value="gltX_bact"/>
    <property type="match status" value="1"/>
</dbReference>
<dbReference type="PANTHER" id="PTHR43311">
    <property type="entry name" value="GLUTAMATE--TRNA LIGASE"/>
    <property type="match status" value="1"/>
</dbReference>
<dbReference type="PANTHER" id="PTHR43311:SF2">
    <property type="entry name" value="GLUTAMATE--TRNA LIGASE, MITOCHONDRIAL-RELATED"/>
    <property type="match status" value="1"/>
</dbReference>
<dbReference type="Pfam" id="PF19269">
    <property type="entry name" value="Anticodon_2"/>
    <property type="match status" value="1"/>
</dbReference>
<dbReference type="Pfam" id="PF00749">
    <property type="entry name" value="tRNA-synt_1c"/>
    <property type="match status" value="1"/>
</dbReference>
<dbReference type="PRINTS" id="PR00987">
    <property type="entry name" value="TRNASYNTHGLU"/>
</dbReference>
<dbReference type="SUPFAM" id="SSF48163">
    <property type="entry name" value="An anticodon-binding domain of class I aminoacyl-tRNA synthetases"/>
    <property type="match status" value="1"/>
</dbReference>
<dbReference type="SUPFAM" id="SSF52374">
    <property type="entry name" value="Nucleotidylyl transferase"/>
    <property type="match status" value="1"/>
</dbReference>
<dbReference type="PROSITE" id="PS00178">
    <property type="entry name" value="AA_TRNA_LIGASE_I"/>
    <property type="match status" value="1"/>
</dbReference>
<protein>
    <recommendedName>
        <fullName evidence="1">Glutamate--tRNA ligase</fullName>
        <ecNumber evidence="1">6.1.1.17</ecNumber>
    </recommendedName>
    <alternativeName>
        <fullName evidence="1">Glutamyl-tRNA synthetase</fullName>
        <shortName evidence="1">GluRS</shortName>
    </alternativeName>
</protein>
<name>SYE_SHEHH</name>
<comment type="function">
    <text evidence="1">Catalyzes the attachment of glutamate to tRNA(Glu) in a two-step reaction: glutamate is first activated by ATP to form Glu-AMP and then transferred to the acceptor end of tRNA(Glu).</text>
</comment>
<comment type="catalytic activity">
    <reaction evidence="1">
        <text>tRNA(Glu) + L-glutamate + ATP = L-glutamyl-tRNA(Glu) + AMP + diphosphate</text>
        <dbReference type="Rhea" id="RHEA:23540"/>
        <dbReference type="Rhea" id="RHEA-COMP:9663"/>
        <dbReference type="Rhea" id="RHEA-COMP:9680"/>
        <dbReference type="ChEBI" id="CHEBI:29985"/>
        <dbReference type="ChEBI" id="CHEBI:30616"/>
        <dbReference type="ChEBI" id="CHEBI:33019"/>
        <dbReference type="ChEBI" id="CHEBI:78442"/>
        <dbReference type="ChEBI" id="CHEBI:78520"/>
        <dbReference type="ChEBI" id="CHEBI:456215"/>
        <dbReference type="EC" id="6.1.1.17"/>
    </reaction>
</comment>
<comment type="cofactor">
    <cofactor evidence="1">
        <name>Zn(2+)</name>
        <dbReference type="ChEBI" id="CHEBI:29105"/>
    </cofactor>
    <text evidence="1">Binds 1 zinc ion per subunit.</text>
</comment>
<comment type="subunit">
    <text evidence="1">Monomer.</text>
</comment>
<comment type="subcellular location">
    <subcellularLocation>
        <location evidence="1">Cytoplasm</location>
    </subcellularLocation>
</comment>
<comment type="similarity">
    <text evidence="1">Belongs to the class-I aminoacyl-tRNA synthetase family. Glutamate--tRNA ligase type 1 subfamily.</text>
</comment>
<feature type="chain" id="PRO_1000074333" description="Glutamate--tRNA ligase">
    <location>
        <begin position="1"/>
        <end position="469"/>
    </location>
</feature>
<feature type="short sequence motif" description="'HIGH' region" evidence="1">
    <location>
        <begin position="9"/>
        <end position="19"/>
    </location>
</feature>
<feature type="short sequence motif" description="'KMSKS' region" evidence="1">
    <location>
        <begin position="236"/>
        <end position="240"/>
    </location>
</feature>
<feature type="binding site" evidence="1">
    <location>
        <position position="98"/>
    </location>
    <ligand>
        <name>Zn(2+)</name>
        <dbReference type="ChEBI" id="CHEBI:29105"/>
    </ligand>
</feature>
<feature type="binding site" evidence="1">
    <location>
        <position position="100"/>
    </location>
    <ligand>
        <name>Zn(2+)</name>
        <dbReference type="ChEBI" id="CHEBI:29105"/>
    </ligand>
</feature>
<feature type="binding site" evidence="1">
    <location>
        <position position="125"/>
    </location>
    <ligand>
        <name>Zn(2+)</name>
        <dbReference type="ChEBI" id="CHEBI:29105"/>
    </ligand>
</feature>
<feature type="binding site" evidence="1">
    <location>
        <position position="127"/>
    </location>
    <ligand>
        <name>Zn(2+)</name>
        <dbReference type="ChEBI" id="CHEBI:29105"/>
    </ligand>
</feature>
<feature type="binding site" evidence="1">
    <location>
        <position position="239"/>
    </location>
    <ligand>
        <name>ATP</name>
        <dbReference type="ChEBI" id="CHEBI:30616"/>
    </ligand>
</feature>
<proteinExistence type="inferred from homology"/>
<accession>B0TNB9</accession>
<gene>
    <name evidence="1" type="primary">gltX</name>
    <name type="ordered locus">Shal_1539</name>
</gene>
<reference key="1">
    <citation type="submission" date="2008-01" db="EMBL/GenBank/DDBJ databases">
        <title>Complete sequence of Shewanella halifaxensis HAW-EB4.</title>
        <authorList>
            <consortium name="US DOE Joint Genome Institute"/>
            <person name="Copeland A."/>
            <person name="Lucas S."/>
            <person name="Lapidus A."/>
            <person name="Glavina del Rio T."/>
            <person name="Dalin E."/>
            <person name="Tice H."/>
            <person name="Bruce D."/>
            <person name="Goodwin L."/>
            <person name="Pitluck S."/>
            <person name="Sims D."/>
            <person name="Brettin T."/>
            <person name="Detter J.C."/>
            <person name="Han C."/>
            <person name="Kuske C.R."/>
            <person name="Schmutz J."/>
            <person name="Larimer F."/>
            <person name="Land M."/>
            <person name="Hauser L."/>
            <person name="Kyrpides N."/>
            <person name="Kim E."/>
            <person name="Zhao J.-S."/>
            <person name="Richardson P."/>
        </authorList>
    </citation>
    <scope>NUCLEOTIDE SEQUENCE [LARGE SCALE GENOMIC DNA]</scope>
    <source>
        <strain>HAW-EB4</strain>
    </source>
</reference>
<sequence>MTIKTRFAPSPTGFLHVGGARTALYSWLYARANQGEFVLRIEDTDIERSTPEACAAILEGMEWLNLNWDEGPYYQTKRFDRYNEIIAQMLEQGTAYKCYCSRERIETMREEQAANGEQQKYDGCCRDKAPRDTDEPFVVRFKNPTEGSVVFDDHVRGRIEFANSTLDDLIIARTEGTPTYNFCVVVDDWDMGITCVVRGEDHINNTPRQINILKALGAPVPEYAHVAMILGDDGAKLSKRHGAVGVMQYRDDGFLPEALLNYLVRLGWSHGDQEVFSIEEMKQFFSLDDINKAASAFNTDKLIWLNQHYIKEMDPEYVASHLEWHMADQNIDTSNGPKLSEVVSALSERAKTLKELAASSRYFFEDFAEFEETAAKKHLRGVALEPLTLIQSKLAALNEWTLEAIHQAIEDTASELDVGMGKVGMPLRVAVTGAGMSPAVDLTLFLVGKARCEQRISKAIEFVANRVNS</sequence>